<sequence length="194" mass="21276">MGRLLPKSFYYRQPDVVARELLGKILVSCASGACMRCMVTEAEAYFGECDPASRARRGRGRIWRALYGEPGRALVYGMHRQWLLNIVAHSEGMAGAVLLRSCQPLEPPRLDPPPIGPGRLARALSIDRGVDGAPVYERGSPLTLWENPEAVEGFRVACSGRVGVSEDLELPLRFYIAGNPFVSKARVSPAPKHC</sequence>
<organism>
    <name type="scientific">Aeropyrum pernix (strain ATCC 700893 / DSM 11879 / JCM 9820 / NBRC 100138 / K1)</name>
    <dbReference type="NCBI Taxonomy" id="272557"/>
    <lineage>
        <taxon>Archaea</taxon>
        <taxon>Thermoproteota</taxon>
        <taxon>Thermoprotei</taxon>
        <taxon>Desulfurococcales</taxon>
        <taxon>Desulfurococcaceae</taxon>
        <taxon>Aeropyrum</taxon>
    </lineage>
</organism>
<evidence type="ECO:0000255" key="1">
    <source>
        <dbReference type="HAMAP-Rule" id="MF_00527"/>
    </source>
</evidence>
<proteinExistence type="inferred from homology"/>
<protein>
    <recommendedName>
        <fullName evidence="1">Putative 3-methyladenine DNA glycosylase</fullName>
        <ecNumber evidence="1">3.2.2.-</ecNumber>
    </recommendedName>
</protein>
<accession>Q9Y9P1</accession>
<dbReference type="EC" id="3.2.2.-" evidence="1"/>
<dbReference type="EMBL" id="BA000002">
    <property type="protein sequence ID" value="BAA81259.1"/>
    <property type="molecule type" value="Genomic_DNA"/>
</dbReference>
<dbReference type="PIR" id="C72450">
    <property type="entry name" value="C72450"/>
</dbReference>
<dbReference type="RefSeq" id="WP_010866886.1">
    <property type="nucleotide sequence ID" value="NC_000854.2"/>
</dbReference>
<dbReference type="SMR" id="Q9Y9P1"/>
<dbReference type="STRING" id="272557.APE_2247"/>
<dbReference type="EnsemblBacteria" id="BAA81259">
    <property type="protein sequence ID" value="BAA81259"/>
    <property type="gene ID" value="APE_2247"/>
</dbReference>
<dbReference type="GeneID" id="1445293"/>
<dbReference type="KEGG" id="ape:APE_2247"/>
<dbReference type="eggNOG" id="arCOG04295">
    <property type="taxonomic scope" value="Archaea"/>
</dbReference>
<dbReference type="Proteomes" id="UP000002518">
    <property type="component" value="Chromosome"/>
</dbReference>
<dbReference type="GO" id="GO:0003905">
    <property type="term" value="F:alkylbase DNA N-glycosylase activity"/>
    <property type="evidence" value="ECO:0007669"/>
    <property type="project" value="InterPro"/>
</dbReference>
<dbReference type="GO" id="GO:0003677">
    <property type="term" value="F:DNA binding"/>
    <property type="evidence" value="ECO:0007669"/>
    <property type="project" value="InterPro"/>
</dbReference>
<dbReference type="GO" id="GO:0006284">
    <property type="term" value="P:base-excision repair"/>
    <property type="evidence" value="ECO:0007669"/>
    <property type="project" value="InterPro"/>
</dbReference>
<dbReference type="CDD" id="cd00540">
    <property type="entry name" value="AAG"/>
    <property type="match status" value="1"/>
</dbReference>
<dbReference type="Gene3D" id="3.10.300.10">
    <property type="entry name" value="Methylpurine-DNA glycosylase (MPG)"/>
    <property type="match status" value="2"/>
</dbReference>
<dbReference type="HAMAP" id="MF_00527">
    <property type="entry name" value="3MGH"/>
    <property type="match status" value="1"/>
</dbReference>
<dbReference type="InterPro" id="IPR011034">
    <property type="entry name" value="Formyl_transferase-like_C_sf"/>
</dbReference>
<dbReference type="InterPro" id="IPR003180">
    <property type="entry name" value="MPG"/>
</dbReference>
<dbReference type="InterPro" id="IPR036995">
    <property type="entry name" value="MPG_sf"/>
</dbReference>
<dbReference type="PANTHER" id="PTHR10429">
    <property type="entry name" value="DNA-3-METHYLADENINE GLYCOSYLASE"/>
    <property type="match status" value="1"/>
</dbReference>
<dbReference type="PANTHER" id="PTHR10429:SF0">
    <property type="entry name" value="DNA-3-METHYLADENINE GLYCOSYLASE"/>
    <property type="match status" value="1"/>
</dbReference>
<dbReference type="Pfam" id="PF02245">
    <property type="entry name" value="Pur_DNA_glyco"/>
    <property type="match status" value="1"/>
</dbReference>
<dbReference type="SUPFAM" id="SSF50486">
    <property type="entry name" value="FMT C-terminal domain-like"/>
    <property type="match status" value="1"/>
</dbReference>
<gene>
    <name type="ordered locus">APE_2247</name>
</gene>
<comment type="similarity">
    <text evidence="1">Belongs to the DNA glycosylase MPG family.</text>
</comment>
<name>3MGH_AERPE</name>
<keyword id="KW-0227">DNA damage</keyword>
<keyword id="KW-0234">DNA repair</keyword>
<keyword id="KW-0378">Hydrolase</keyword>
<keyword id="KW-1185">Reference proteome</keyword>
<reference key="1">
    <citation type="journal article" date="1999" name="DNA Res.">
        <title>Complete genome sequence of an aerobic hyper-thermophilic crenarchaeon, Aeropyrum pernix K1.</title>
        <authorList>
            <person name="Kawarabayasi Y."/>
            <person name="Hino Y."/>
            <person name="Horikawa H."/>
            <person name="Yamazaki S."/>
            <person name="Haikawa Y."/>
            <person name="Jin-no K."/>
            <person name="Takahashi M."/>
            <person name="Sekine M."/>
            <person name="Baba S."/>
            <person name="Ankai A."/>
            <person name="Kosugi H."/>
            <person name="Hosoyama A."/>
            <person name="Fukui S."/>
            <person name="Nagai Y."/>
            <person name="Nishijima K."/>
            <person name="Nakazawa H."/>
            <person name="Takamiya M."/>
            <person name="Masuda S."/>
            <person name="Funahashi T."/>
            <person name="Tanaka T."/>
            <person name="Kudoh Y."/>
            <person name="Yamazaki J."/>
            <person name="Kushida N."/>
            <person name="Oguchi A."/>
            <person name="Aoki K."/>
            <person name="Kubota K."/>
            <person name="Nakamura Y."/>
            <person name="Nomura N."/>
            <person name="Sako Y."/>
            <person name="Kikuchi H."/>
        </authorList>
    </citation>
    <scope>NUCLEOTIDE SEQUENCE [LARGE SCALE GENOMIC DNA]</scope>
    <source>
        <strain>ATCC 700893 / DSM 11879 / JCM 9820 / NBRC 100138 / K1</strain>
    </source>
</reference>
<feature type="chain" id="PRO_0000100117" description="Putative 3-methyladenine DNA glycosylase">
    <location>
        <begin position="1"/>
        <end position="194"/>
    </location>
</feature>